<accession>Q8IQC1</accession>
<accession>Q8SYV2</accession>
<accession>Q9VSR9</accession>
<reference key="1">
    <citation type="journal article" date="2000" name="Science">
        <title>The genome sequence of Drosophila melanogaster.</title>
        <authorList>
            <person name="Adams M.D."/>
            <person name="Celniker S.E."/>
            <person name="Holt R.A."/>
            <person name="Evans C.A."/>
            <person name="Gocayne J.D."/>
            <person name="Amanatides P.G."/>
            <person name="Scherer S.E."/>
            <person name="Li P.W."/>
            <person name="Hoskins R.A."/>
            <person name="Galle R.F."/>
            <person name="George R.A."/>
            <person name="Lewis S.E."/>
            <person name="Richards S."/>
            <person name="Ashburner M."/>
            <person name="Henderson S.N."/>
            <person name="Sutton G.G."/>
            <person name="Wortman J.R."/>
            <person name="Yandell M.D."/>
            <person name="Zhang Q."/>
            <person name="Chen L.X."/>
            <person name="Brandon R.C."/>
            <person name="Rogers Y.-H.C."/>
            <person name="Blazej R.G."/>
            <person name="Champe M."/>
            <person name="Pfeiffer B.D."/>
            <person name="Wan K.H."/>
            <person name="Doyle C."/>
            <person name="Baxter E.G."/>
            <person name="Helt G."/>
            <person name="Nelson C.R."/>
            <person name="Miklos G.L.G."/>
            <person name="Abril J.F."/>
            <person name="Agbayani A."/>
            <person name="An H.-J."/>
            <person name="Andrews-Pfannkoch C."/>
            <person name="Baldwin D."/>
            <person name="Ballew R.M."/>
            <person name="Basu A."/>
            <person name="Baxendale J."/>
            <person name="Bayraktaroglu L."/>
            <person name="Beasley E.M."/>
            <person name="Beeson K.Y."/>
            <person name="Benos P.V."/>
            <person name="Berman B.P."/>
            <person name="Bhandari D."/>
            <person name="Bolshakov S."/>
            <person name="Borkova D."/>
            <person name="Botchan M.R."/>
            <person name="Bouck J."/>
            <person name="Brokstein P."/>
            <person name="Brottier P."/>
            <person name="Burtis K.C."/>
            <person name="Busam D.A."/>
            <person name="Butler H."/>
            <person name="Cadieu E."/>
            <person name="Center A."/>
            <person name="Chandra I."/>
            <person name="Cherry J.M."/>
            <person name="Cawley S."/>
            <person name="Dahlke C."/>
            <person name="Davenport L.B."/>
            <person name="Davies P."/>
            <person name="de Pablos B."/>
            <person name="Delcher A."/>
            <person name="Deng Z."/>
            <person name="Mays A.D."/>
            <person name="Dew I."/>
            <person name="Dietz S.M."/>
            <person name="Dodson K."/>
            <person name="Doup L.E."/>
            <person name="Downes M."/>
            <person name="Dugan-Rocha S."/>
            <person name="Dunkov B.C."/>
            <person name="Dunn P."/>
            <person name="Durbin K.J."/>
            <person name="Evangelista C.C."/>
            <person name="Ferraz C."/>
            <person name="Ferriera S."/>
            <person name="Fleischmann W."/>
            <person name="Fosler C."/>
            <person name="Gabrielian A.E."/>
            <person name="Garg N.S."/>
            <person name="Gelbart W.M."/>
            <person name="Glasser K."/>
            <person name="Glodek A."/>
            <person name="Gong F."/>
            <person name="Gorrell J.H."/>
            <person name="Gu Z."/>
            <person name="Guan P."/>
            <person name="Harris M."/>
            <person name="Harris N.L."/>
            <person name="Harvey D.A."/>
            <person name="Heiman T.J."/>
            <person name="Hernandez J.R."/>
            <person name="Houck J."/>
            <person name="Hostin D."/>
            <person name="Houston K.A."/>
            <person name="Howland T.J."/>
            <person name="Wei M.-H."/>
            <person name="Ibegwam C."/>
            <person name="Jalali M."/>
            <person name="Kalush F."/>
            <person name="Karpen G.H."/>
            <person name="Ke Z."/>
            <person name="Kennison J.A."/>
            <person name="Ketchum K.A."/>
            <person name="Kimmel B.E."/>
            <person name="Kodira C.D."/>
            <person name="Kraft C.L."/>
            <person name="Kravitz S."/>
            <person name="Kulp D."/>
            <person name="Lai Z."/>
            <person name="Lasko P."/>
            <person name="Lei Y."/>
            <person name="Levitsky A.A."/>
            <person name="Li J.H."/>
            <person name="Li Z."/>
            <person name="Liang Y."/>
            <person name="Lin X."/>
            <person name="Liu X."/>
            <person name="Mattei B."/>
            <person name="McIntosh T.C."/>
            <person name="McLeod M.P."/>
            <person name="McPherson D."/>
            <person name="Merkulov G."/>
            <person name="Milshina N.V."/>
            <person name="Mobarry C."/>
            <person name="Morris J."/>
            <person name="Moshrefi A."/>
            <person name="Mount S.M."/>
            <person name="Moy M."/>
            <person name="Murphy B."/>
            <person name="Murphy L."/>
            <person name="Muzny D.M."/>
            <person name="Nelson D.L."/>
            <person name="Nelson D.R."/>
            <person name="Nelson K.A."/>
            <person name="Nixon K."/>
            <person name="Nusskern D.R."/>
            <person name="Pacleb J.M."/>
            <person name="Palazzolo M."/>
            <person name="Pittman G.S."/>
            <person name="Pan S."/>
            <person name="Pollard J."/>
            <person name="Puri V."/>
            <person name="Reese M.G."/>
            <person name="Reinert K."/>
            <person name="Remington K."/>
            <person name="Saunders R.D.C."/>
            <person name="Scheeler F."/>
            <person name="Shen H."/>
            <person name="Shue B.C."/>
            <person name="Siden-Kiamos I."/>
            <person name="Simpson M."/>
            <person name="Skupski M.P."/>
            <person name="Smith T.J."/>
            <person name="Spier E."/>
            <person name="Spradling A.C."/>
            <person name="Stapleton M."/>
            <person name="Strong R."/>
            <person name="Sun E."/>
            <person name="Svirskas R."/>
            <person name="Tector C."/>
            <person name="Turner R."/>
            <person name="Venter E."/>
            <person name="Wang A.H."/>
            <person name="Wang X."/>
            <person name="Wang Z.-Y."/>
            <person name="Wassarman D.A."/>
            <person name="Weinstock G.M."/>
            <person name="Weissenbach J."/>
            <person name="Williams S.M."/>
            <person name="Woodage T."/>
            <person name="Worley K.C."/>
            <person name="Wu D."/>
            <person name="Yang S."/>
            <person name="Yao Q.A."/>
            <person name="Ye J."/>
            <person name="Yeh R.-F."/>
            <person name="Zaveri J.S."/>
            <person name="Zhan M."/>
            <person name="Zhang G."/>
            <person name="Zhao Q."/>
            <person name="Zheng L."/>
            <person name="Zheng X.H."/>
            <person name="Zhong F.N."/>
            <person name="Zhong W."/>
            <person name="Zhou X."/>
            <person name="Zhu S.C."/>
            <person name="Zhu X."/>
            <person name="Smith H.O."/>
            <person name="Gibbs R.A."/>
            <person name="Myers E.W."/>
            <person name="Rubin G.M."/>
            <person name="Venter J.C."/>
        </authorList>
    </citation>
    <scope>NUCLEOTIDE SEQUENCE [LARGE SCALE GENOMIC DNA]</scope>
    <source>
        <strain>Berkeley</strain>
    </source>
</reference>
<reference key="2">
    <citation type="journal article" date="2002" name="Genome Biol.">
        <title>Annotation of the Drosophila melanogaster euchromatic genome: a systematic review.</title>
        <authorList>
            <person name="Misra S."/>
            <person name="Crosby M.A."/>
            <person name="Mungall C.J."/>
            <person name="Matthews B.B."/>
            <person name="Campbell K.S."/>
            <person name="Hradecky P."/>
            <person name="Huang Y."/>
            <person name="Kaminker J.S."/>
            <person name="Millburn G.H."/>
            <person name="Prochnik S.E."/>
            <person name="Smith C.D."/>
            <person name="Tupy J.L."/>
            <person name="Whitfield E.J."/>
            <person name="Bayraktaroglu L."/>
            <person name="Berman B.P."/>
            <person name="Bettencourt B.R."/>
            <person name="Celniker S.E."/>
            <person name="de Grey A.D.N.J."/>
            <person name="Drysdale R.A."/>
            <person name="Harris N.L."/>
            <person name="Richter J."/>
            <person name="Russo S."/>
            <person name="Schroeder A.J."/>
            <person name="Shu S.Q."/>
            <person name="Stapleton M."/>
            <person name="Yamada C."/>
            <person name="Ashburner M."/>
            <person name="Gelbart W.M."/>
            <person name="Rubin G.M."/>
            <person name="Lewis S.E."/>
        </authorList>
    </citation>
    <scope>GENOME REANNOTATION</scope>
    <source>
        <strain>Berkeley</strain>
    </source>
</reference>
<reference key="3">
    <citation type="journal article" date="2002" name="Genome Biol.">
        <title>A Drosophila full-length cDNA resource.</title>
        <authorList>
            <person name="Stapleton M."/>
            <person name="Carlson J.W."/>
            <person name="Brokstein P."/>
            <person name="Yu C."/>
            <person name="Champe M."/>
            <person name="George R.A."/>
            <person name="Guarin H."/>
            <person name="Kronmiller B."/>
            <person name="Pacleb J.M."/>
            <person name="Park S."/>
            <person name="Wan K.H."/>
            <person name="Rubin G.M."/>
            <person name="Celniker S.E."/>
        </authorList>
    </citation>
    <scope>NUCLEOTIDE SEQUENCE [LARGE SCALE MRNA] (ISOFORM 1)</scope>
    <source>
        <strain>Berkeley</strain>
        <tissue>Embryo</tissue>
    </source>
</reference>
<name>TVP23_DROME</name>
<keyword id="KW-0025">Alternative splicing</keyword>
<keyword id="KW-0472">Membrane</keyword>
<keyword id="KW-1185">Reference proteome</keyword>
<keyword id="KW-0812">Transmembrane</keyword>
<keyword id="KW-1133">Transmembrane helix</keyword>
<feature type="chain" id="PRO_0000212834" description="Uncharacterized Golgi apparatus membrane protein-like protein CG5021">
    <location>
        <begin position="1"/>
        <end position="223"/>
    </location>
</feature>
<feature type="transmembrane region" description="Helical" evidence="1">
    <location>
        <begin position="35"/>
        <end position="55"/>
    </location>
</feature>
<feature type="transmembrane region" description="Helical" evidence="1">
    <location>
        <begin position="56"/>
        <end position="76"/>
    </location>
</feature>
<feature type="transmembrane region" description="Helical" evidence="1">
    <location>
        <begin position="129"/>
        <end position="149"/>
    </location>
</feature>
<feature type="transmembrane region" description="Helical" evidence="1">
    <location>
        <begin position="154"/>
        <end position="174"/>
    </location>
</feature>
<feature type="region of interest" description="Disordered" evidence="2">
    <location>
        <begin position="1"/>
        <end position="30"/>
    </location>
</feature>
<feature type="compositionally biased region" description="Acidic residues" evidence="2">
    <location>
        <begin position="12"/>
        <end position="25"/>
    </location>
</feature>
<feature type="splice variant" id="VSP_008745" description="In isoform 2." evidence="3">
    <location>
        <begin position="7"/>
        <end position="9"/>
    </location>
</feature>
<feature type="splice variant" id="VSP_008746" description="In isoform 2 and isoform 3." evidence="3">
    <location>
        <begin position="116"/>
        <end position="120"/>
    </location>
</feature>
<proteinExistence type="evidence at transcript level"/>
<organism>
    <name type="scientific">Drosophila melanogaster</name>
    <name type="common">Fruit fly</name>
    <dbReference type="NCBI Taxonomy" id="7227"/>
    <lineage>
        <taxon>Eukaryota</taxon>
        <taxon>Metazoa</taxon>
        <taxon>Ecdysozoa</taxon>
        <taxon>Arthropoda</taxon>
        <taxon>Hexapoda</taxon>
        <taxon>Insecta</taxon>
        <taxon>Pterygota</taxon>
        <taxon>Neoptera</taxon>
        <taxon>Endopterygota</taxon>
        <taxon>Diptera</taxon>
        <taxon>Brachycera</taxon>
        <taxon>Muscomorpha</taxon>
        <taxon>Ephydroidea</taxon>
        <taxon>Drosophilidae</taxon>
        <taxon>Drosophila</taxon>
        <taxon>Sophophora</taxon>
    </lineage>
</organism>
<gene>
    <name type="ORF">CG5021</name>
</gene>
<sequence length="223" mass="25527">MASATVRNVPLLDDDTIPFGEEDEMRDPSRAGQKYTHPYVTFFHLFFRGAAILIYMFCGWFSDSFITSFVFVVLFLSADFWTVKNISGRLLVGLRWWNYVDDDGVSHWVFESKNSESYQSRVNKNEQRIFWLGLILCPVFWGLFFLFALFGLKFKWLLLVMIAIALNAANLYGYVKCNYGANKDLNSAATDFVKTQFFKNAVDIMTRPSGAPPPTNVRPTGVV</sequence>
<comment type="subcellular location">
    <subcellularLocation>
        <location evidence="3">Membrane</location>
        <topology evidence="3">Multi-pass membrane protein</topology>
    </subcellularLocation>
</comment>
<comment type="alternative products">
    <event type="alternative splicing"/>
    <isoform>
        <id>Q8IQC1-1</id>
        <name>1</name>
        <sequence type="displayed"/>
    </isoform>
    <isoform>
        <id>Q8IQC1-2</id>
        <name>2</name>
        <sequence type="described" ref="VSP_008745 VSP_008746"/>
    </isoform>
    <isoform>
        <id>Q8IQC1-3</id>
        <name>3</name>
        <sequence type="described" ref="VSP_008746"/>
    </isoform>
</comment>
<comment type="similarity">
    <text evidence="3">Belongs to the TVP23 family.</text>
</comment>
<evidence type="ECO:0000255" key="1"/>
<evidence type="ECO:0000256" key="2">
    <source>
        <dbReference type="SAM" id="MobiDB-lite"/>
    </source>
</evidence>
<evidence type="ECO:0000305" key="3"/>
<dbReference type="EMBL" id="AE014296">
    <property type="protein sequence ID" value="AAN11977.1"/>
    <property type="molecule type" value="Genomic_DNA"/>
</dbReference>
<dbReference type="EMBL" id="AE014296">
    <property type="protein sequence ID" value="AAF50344.2"/>
    <property type="molecule type" value="Genomic_DNA"/>
</dbReference>
<dbReference type="EMBL" id="AY071297">
    <property type="protein sequence ID" value="AAL48919.1"/>
    <property type="molecule type" value="mRNA"/>
</dbReference>
<dbReference type="RefSeq" id="NP_001163390.1">
    <molecule id="Q8IQC1-1"/>
    <property type="nucleotide sequence ID" value="NM_001169919.2"/>
</dbReference>
<dbReference type="RefSeq" id="NP_648270.2">
    <molecule id="Q8IQC1-3"/>
    <property type="nucleotide sequence ID" value="NM_140013.3"/>
</dbReference>
<dbReference type="RefSeq" id="NP_729433.1">
    <molecule id="Q8IQC1-2"/>
    <property type="nucleotide sequence ID" value="NM_168304.2"/>
</dbReference>
<dbReference type="BioGRID" id="64429">
    <property type="interactions" value="7"/>
</dbReference>
<dbReference type="FunCoup" id="Q8IQC1">
    <property type="interactions" value="1329"/>
</dbReference>
<dbReference type="IntAct" id="Q8IQC1">
    <property type="interactions" value="7"/>
</dbReference>
<dbReference type="STRING" id="7227.FBpp0290362"/>
<dbReference type="PaxDb" id="7227-FBpp0290362"/>
<dbReference type="DNASU" id="39025"/>
<dbReference type="EnsemblMetazoa" id="FBtr0076513">
    <molecule id="Q8IQC1-3"/>
    <property type="protein sequence ID" value="FBpp0076240"/>
    <property type="gene ID" value="FBgn0035944"/>
</dbReference>
<dbReference type="EnsemblMetazoa" id="FBtr0076514">
    <molecule id="Q8IQC1-2"/>
    <property type="protein sequence ID" value="FBpp0076241"/>
    <property type="gene ID" value="FBgn0035944"/>
</dbReference>
<dbReference type="EnsemblMetazoa" id="FBtr0301139">
    <molecule id="Q8IQC1-1"/>
    <property type="protein sequence ID" value="FBpp0290362"/>
    <property type="gene ID" value="FBgn0035944"/>
</dbReference>
<dbReference type="GeneID" id="39025"/>
<dbReference type="KEGG" id="dme:Dmel_CG5021"/>
<dbReference type="UCSC" id="CG5021-RA">
    <molecule id="Q8IQC1-1"/>
    <property type="organism name" value="d. melanogaster"/>
</dbReference>
<dbReference type="AGR" id="FB:FBgn0035944"/>
<dbReference type="FlyBase" id="FBgn0035944">
    <property type="gene designation" value="CG5021"/>
</dbReference>
<dbReference type="VEuPathDB" id="VectorBase:FBgn0035944"/>
<dbReference type="eggNOG" id="KOG3195">
    <property type="taxonomic scope" value="Eukaryota"/>
</dbReference>
<dbReference type="GeneTree" id="ENSGT00390000004428"/>
<dbReference type="InParanoid" id="Q8IQC1"/>
<dbReference type="OMA" id="FEWMIVA"/>
<dbReference type="OrthoDB" id="2151161at2759"/>
<dbReference type="PhylomeDB" id="Q8IQC1"/>
<dbReference type="BioGRID-ORCS" id="39025">
    <property type="hits" value="0 hits in 3 CRISPR screens"/>
</dbReference>
<dbReference type="GenomeRNAi" id="39025"/>
<dbReference type="PRO" id="PR:Q8IQC1"/>
<dbReference type="Proteomes" id="UP000000803">
    <property type="component" value="Chromosome 3L"/>
</dbReference>
<dbReference type="Bgee" id="FBgn0035944">
    <property type="expression patterns" value="Expressed in spermathecum and 187 other cell types or tissues"/>
</dbReference>
<dbReference type="ExpressionAtlas" id="Q8IQC1">
    <property type="expression patterns" value="baseline and differential"/>
</dbReference>
<dbReference type="GO" id="GO:0000139">
    <property type="term" value="C:Golgi membrane"/>
    <property type="evidence" value="ECO:0000318"/>
    <property type="project" value="GO_Central"/>
</dbReference>
<dbReference type="GO" id="GO:0009306">
    <property type="term" value="P:protein secretion"/>
    <property type="evidence" value="ECO:0000318"/>
    <property type="project" value="GO_Central"/>
</dbReference>
<dbReference type="GO" id="GO:0016192">
    <property type="term" value="P:vesicle-mediated transport"/>
    <property type="evidence" value="ECO:0000318"/>
    <property type="project" value="GO_Central"/>
</dbReference>
<dbReference type="InterPro" id="IPR008564">
    <property type="entry name" value="TVP23-like"/>
</dbReference>
<dbReference type="PANTHER" id="PTHR13019">
    <property type="entry name" value="GOLGI APPARATUS MEMBRANE PROTEIN TVP23"/>
    <property type="match status" value="1"/>
</dbReference>
<dbReference type="PANTHER" id="PTHR13019:SF25">
    <property type="entry name" value="GOLGI APPARATUS MEMBRANE PROTEIN TVP23 HOMOLOG"/>
    <property type="match status" value="1"/>
</dbReference>
<dbReference type="Pfam" id="PF05832">
    <property type="entry name" value="DUF846"/>
    <property type="match status" value="1"/>
</dbReference>
<protein>
    <recommendedName>
        <fullName>Uncharacterized Golgi apparatus membrane protein-like protein CG5021</fullName>
    </recommendedName>
</protein>